<dbReference type="EMBL" id="U32222">
    <property type="protein sequence ID" value="AAC34182.1"/>
    <property type="molecule type" value="Genomic_DNA"/>
</dbReference>
<dbReference type="PIR" id="S10628">
    <property type="entry name" value="S10628"/>
</dbReference>
<dbReference type="RefSeq" id="NP_052285.1">
    <property type="nucleotide sequence ID" value="NC_001317.1"/>
</dbReference>
<dbReference type="SMR" id="P41059"/>
<dbReference type="KEGG" id="vg:1262453"/>
<dbReference type="OrthoDB" id="24362at10239"/>
<dbReference type="Proteomes" id="UP000000369">
    <property type="component" value="Segment"/>
</dbReference>
<dbReference type="GO" id="GO:0008270">
    <property type="term" value="F:zinc ion binding"/>
    <property type="evidence" value="ECO:0007669"/>
    <property type="project" value="UniProtKB-KW"/>
</dbReference>
<dbReference type="GO" id="GO:1900378">
    <property type="term" value="P:positive regulation of secondary metabolite biosynthetic process"/>
    <property type="evidence" value="ECO:0007669"/>
    <property type="project" value="TreeGrafter"/>
</dbReference>
<dbReference type="Gene3D" id="1.20.120.910">
    <property type="entry name" value="DksA, coiled-coil domain"/>
    <property type="match status" value="1"/>
</dbReference>
<dbReference type="InterPro" id="IPR020460">
    <property type="entry name" value="Znf_C4-type_bac"/>
</dbReference>
<dbReference type="InterPro" id="IPR012783">
    <property type="entry name" value="Znf_C4_TraR"/>
</dbReference>
<dbReference type="InterPro" id="IPR000962">
    <property type="entry name" value="Znf_DskA_TraR"/>
</dbReference>
<dbReference type="InterPro" id="IPR020458">
    <property type="entry name" value="Znf_DskA_TraR_CS"/>
</dbReference>
<dbReference type="NCBIfam" id="TIGR02419">
    <property type="entry name" value="C4_traR_proteo"/>
    <property type="match status" value="1"/>
</dbReference>
<dbReference type="PANTHER" id="PTHR38777:SF1">
    <property type="entry name" value="DNAK SUPPRESSOR PROTEIN"/>
    <property type="match status" value="1"/>
</dbReference>
<dbReference type="PANTHER" id="PTHR38777">
    <property type="entry name" value="FELS-2 PROPHAGE PROTEIN"/>
    <property type="match status" value="1"/>
</dbReference>
<dbReference type="Pfam" id="PF01258">
    <property type="entry name" value="zf-dskA_traR"/>
    <property type="match status" value="1"/>
</dbReference>
<dbReference type="PRINTS" id="PR00618">
    <property type="entry name" value="DKSAZNFINGER"/>
</dbReference>
<dbReference type="SUPFAM" id="SSF57716">
    <property type="entry name" value="Glucocorticoid receptor-like (DNA-binding domain)"/>
    <property type="match status" value="1"/>
</dbReference>
<dbReference type="PROSITE" id="PS01102">
    <property type="entry name" value="ZF_DKSA_1"/>
    <property type="match status" value="1"/>
</dbReference>
<dbReference type="PROSITE" id="PS51128">
    <property type="entry name" value="ZF_DKSA_2"/>
    <property type="match status" value="1"/>
</dbReference>
<feature type="chain" id="PRO_0000187549" description="Uncharacterized 8.5 kDa protein in gpA 5'region">
    <location>
        <begin position="1"/>
        <end position="75"/>
    </location>
</feature>
<feature type="zinc finger region" description="dksA C4-type" evidence="1">
    <location>
        <begin position="35"/>
        <end position="59"/>
    </location>
</feature>
<feature type="region of interest" description="Disordered" evidence="2">
    <location>
        <begin position="1"/>
        <end position="23"/>
    </location>
</feature>
<feature type="compositionally biased region" description="Basic and acidic residues" evidence="2">
    <location>
        <begin position="9"/>
        <end position="20"/>
    </location>
</feature>
<accession>P41059</accession>
<protein>
    <recommendedName>
        <fullName>Uncharacterized 8.5 kDa protein in gpA 5'region</fullName>
    </recommendedName>
</protein>
<proteinExistence type="predicted"/>
<gene>
    <name type="primary">CP80</name>
</gene>
<keyword id="KW-0479">Metal-binding</keyword>
<keyword id="KW-1185">Reference proteome</keyword>
<keyword id="KW-0862">Zinc</keyword>
<keyword id="KW-0863">Zinc-finger</keyword>
<sequence length="75" mass="8524">MADAMDLAQLREQEDRERHISNARSRRHEVSAFICEECDAPIPEARRRAIPGVQCCVTCQEILELKSKHYNGGAL</sequence>
<organism>
    <name type="scientific">Escherichia phage 186</name>
    <name type="common">Bacteriophage 186</name>
    <dbReference type="NCBI Taxonomy" id="29252"/>
    <lineage>
        <taxon>Viruses</taxon>
        <taxon>Duplodnaviria</taxon>
        <taxon>Heunggongvirae</taxon>
        <taxon>Uroviricota</taxon>
        <taxon>Caudoviricetes</taxon>
        <taxon>Peduoviridae</taxon>
        <taxon>Eganvirus</taxon>
    </lineage>
</organism>
<evidence type="ECO:0000255" key="1">
    <source>
        <dbReference type="PROSITE-ProRule" id="PRU00510"/>
    </source>
</evidence>
<evidence type="ECO:0000256" key="2">
    <source>
        <dbReference type="SAM" id="MobiDB-lite"/>
    </source>
</evidence>
<reference key="1">
    <citation type="journal article" date="1990" name="J. Mol. Biol.">
        <title>DNA replication studies with coliphage 186. III. A single phage gene is required for phage 186 replication.</title>
        <authorList>
            <person name="Sivaprasad A.V."/>
            <person name="Jarvinen R."/>
            <person name="Puspurs A."/>
            <person name="Egan J.B."/>
        </authorList>
    </citation>
    <scope>NUCLEOTIDE SEQUENCE [GENOMIC DNA]</scope>
    <source>
        <strain>186CITSP</strain>
    </source>
</reference>
<organismHost>
    <name type="scientific">Escherichia coli</name>
    <dbReference type="NCBI Taxonomy" id="562"/>
</organismHost>
<name>CP80_BP186</name>